<protein>
    <recommendedName>
        <fullName evidence="1">Small ribosomal subunit protein uS2</fullName>
    </recommendedName>
    <alternativeName>
        <fullName evidence="2">30S ribosomal protein S2</fullName>
    </alternativeName>
</protein>
<name>RS2_CERSK</name>
<sequence length="253" mass="27550">MDMALPEFSMRQLLEAGVHYGHQTARWNPKMAEFIYGDRNGIHIVDLTQTVPMLDQALKVVRDTVAKGGRILFVGTKRQAQKPIAEAAEKCAQHYMNHRWLGGTLTNWKTVSQSIQRLKQLDEVLATGAEGLTKKERLNMEREQQKLQASLGGIREMGGTPDLLFIIDVGKEDLAIAEAQKLGIPVVAVVDTNNSPKGVDYVIPGNDDAARAIALYCDLVSRAALDGMSAQMGAAGIDLGALDVAPEEETLEA</sequence>
<reference key="1">
    <citation type="journal article" date="2009" name="J. Bacteriol.">
        <title>Complete genome sequence of Rhodobacter sphaeroides KD131.</title>
        <authorList>
            <person name="Lim S.-K."/>
            <person name="Kim S.J."/>
            <person name="Cha S.H."/>
            <person name="Oh Y.-K."/>
            <person name="Rhee H.-J."/>
            <person name="Kim M.-S."/>
            <person name="Lee J.K."/>
        </authorList>
    </citation>
    <scope>NUCLEOTIDE SEQUENCE [LARGE SCALE GENOMIC DNA]</scope>
    <source>
        <strain>KD131 / KCTC 12085</strain>
    </source>
</reference>
<evidence type="ECO:0000255" key="1">
    <source>
        <dbReference type="HAMAP-Rule" id="MF_00291"/>
    </source>
</evidence>
<evidence type="ECO:0000305" key="2"/>
<accession>B9KSF0</accession>
<comment type="similarity">
    <text evidence="1">Belongs to the universal ribosomal protein uS2 family.</text>
</comment>
<feature type="chain" id="PRO_1000194342" description="Small ribosomal subunit protein uS2">
    <location>
        <begin position="1"/>
        <end position="253"/>
    </location>
</feature>
<keyword id="KW-0687">Ribonucleoprotein</keyword>
<keyword id="KW-0689">Ribosomal protein</keyword>
<proteinExistence type="inferred from homology"/>
<dbReference type="EMBL" id="CP001150">
    <property type="protein sequence ID" value="ACM00957.1"/>
    <property type="molecule type" value="Genomic_DNA"/>
</dbReference>
<dbReference type="RefSeq" id="WP_002719944.1">
    <property type="nucleotide sequence ID" value="NC_011963.1"/>
</dbReference>
<dbReference type="SMR" id="B9KSF0"/>
<dbReference type="GeneID" id="67446527"/>
<dbReference type="KEGG" id="rsk:RSKD131_1097"/>
<dbReference type="HOGENOM" id="CLU_040318_2_1_5"/>
<dbReference type="GO" id="GO:0022627">
    <property type="term" value="C:cytosolic small ribosomal subunit"/>
    <property type="evidence" value="ECO:0007669"/>
    <property type="project" value="TreeGrafter"/>
</dbReference>
<dbReference type="GO" id="GO:0003735">
    <property type="term" value="F:structural constituent of ribosome"/>
    <property type="evidence" value="ECO:0007669"/>
    <property type="project" value="InterPro"/>
</dbReference>
<dbReference type="GO" id="GO:0006412">
    <property type="term" value="P:translation"/>
    <property type="evidence" value="ECO:0007669"/>
    <property type="project" value="UniProtKB-UniRule"/>
</dbReference>
<dbReference type="CDD" id="cd01425">
    <property type="entry name" value="RPS2"/>
    <property type="match status" value="1"/>
</dbReference>
<dbReference type="FunFam" id="1.10.287.610:FF:000001">
    <property type="entry name" value="30S ribosomal protein S2"/>
    <property type="match status" value="1"/>
</dbReference>
<dbReference type="Gene3D" id="3.40.50.10490">
    <property type="entry name" value="Glucose-6-phosphate isomerase like protein, domain 1"/>
    <property type="match status" value="1"/>
</dbReference>
<dbReference type="Gene3D" id="1.10.287.610">
    <property type="entry name" value="Helix hairpin bin"/>
    <property type="match status" value="1"/>
</dbReference>
<dbReference type="HAMAP" id="MF_00291_B">
    <property type="entry name" value="Ribosomal_uS2_B"/>
    <property type="match status" value="1"/>
</dbReference>
<dbReference type="InterPro" id="IPR001865">
    <property type="entry name" value="Ribosomal_uS2"/>
</dbReference>
<dbReference type="InterPro" id="IPR005706">
    <property type="entry name" value="Ribosomal_uS2_bac/mit/plastid"/>
</dbReference>
<dbReference type="InterPro" id="IPR018130">
    <property type="entry name" value="Ribosomal_uS2_CS"/>
</dbReference>
<dbReference type="InterPro" id="IPR023591">
    <property type="entry name" value="Ribosomal_uS2_flav_dom_sf"/>
</dbReference>
<dbReference type="NCBIfam" id="TIGR01011">
    <property type="entry name" value="rpsB_bact"/>
    <property type="match status" value="1"/>
</dbReference>
<dbReference type="PANTHER" id="PTHR12534">
    <property type="entry name" value="30S RIBOSOMAL PROTEIN S2 PROKARYOTIC AND ORGANELLAR"/>
    <property type="match status" value="1"/>
</dbReference>
<dbReference type="PANTHER" id="PTHR12534:SF0">
    <property type="entry name" value="SMALL RIBOSOMAL SUBUNIT PROTEIN US2M"/>
    <property type="match status" value="1"/>
</dbReference>
<dbReference type="Pfam" id="PF00318">
    <property type="entry name" value="Ribosomal_S2"/>
    <property type="match status" value="1"/>
</dbReference>
<dbReference type="PRINTS" id="PR00395">
    <property type="entry name" value="RIBOSOMALS2"/>
</dbReference>
<dbReference type="SUPFAM" id="SSF52313">
    <property type="entry name" value="Ribosomal protein S2"/>
    <property type="match status" value="1"/>
</dbReference>
<dbReference type="PROSITE" id="PS00963">
    <property type="entry name" value="RIBOSOMAL_S2_2"/>
    <property type="match status" value="1"/>
</dbReference>
<gene>
    <name evidence="1" type="primary">rpsB</name>
    <name type="ordered locus">RSKD131_1097</name>
</gene>
<organism>
    <name type="scientific">Cereibacter sphaeroides (strain KD131 / KCTC 12085)</name>
    <name type="common">Rhodobacter sphaeroides</name>
    <dbReference type="NCBI Taxonomy" id="557760"/>
    <lineage>
        <taxon>Bacteria</taxon>
        <taxon>Pseudomonadati</taxon>
        <taxon>Pseudomonadota</taxon>
        <taxon>Alphaproteobacteria</taxon>
        <taxon>Rhodobacterales</taxon>
        <taxon>Paracoccaceae</taxon>
        <taxon>Cereibacter</taxon>
    </lineage>
</organism>